<sequence>MPPSKWDEEEEEGVSPPPVAARRRFDDEEDGDVLDSWDAADDSEVEREKAAKAAEAKAKAEAEAAANKKSKAQRIAEHKTRRKAAEDEEDDESDEDEAEKRARLRRTEKDSDLKHAEDLFGDIDLNRNRGKNKTIVVHDASGDPTQAVDLSAMPLFKPATKEQFTTLSNTLVPLLTAQSKKPQYALWLPEFAKQLAKELPSGDIKKVASALTTLSNEKMKEERAADKGSKKTKAAKTKVSLVASRSDKIETTAYDDDGLDDDDFM</sequence>
<keyword id="KW-0175">Coiled coil</keyword>
<keyword id="KW-0963">Cytoplasm</keyword>
<keyword id="KW-0396">Initiation factor</keyword>
<keyword id="KW-0648">Protein biosynthesis</keyword>
<keyword id="KW-1185">Reference proteome</keyword>
<organism>
    <name type="scientific">Emericella nidulans (strain FGSC A4 / ATCC 38163 / CBS 112.46 / NRRL 194 / M139)</name>
    <name type="common">Aspergillus nidulans</name>
    <dbReference type="NCBI Taxonomy" id="227321"/>
    <lineage>
        <taxon>Eukaryota</taxon>
        <taxon>Fungi</taxon>
        <taxon>Dikarya</taxon>
        <taxon>Ascomycota</taxon>
        <taxon>Pezizomycotina</taxon>
        <taxon>Eurotiomycetes</taxon>
        <taxon>Eurotiomycetidae</taxon>
        <taxon>Eurotiales</taxon>
        <taxon>Aspergillaceae</taxon>
        <taxon>Aspergillus</taxon>
        <taxon>Aspergillus subgen. Nidulantes</taxon>
    </lineage>
</organism>
<name>EIF3J_EMENI</name>
<dbReference type="EMBL" id="AACD01000098">
    <property type="protein sequence ID" value="EAA62838.1"/>
    <property type="status" value="ALT_SEQ"/>
    <property type="molecule type" value="Genomic_DNA"/>
</dbReference>
<dbReference type="EMBL" id="BN001305">
    <property type="protein sequence ID" value="CBF81290.1"/>
    <property type="molecule type" value="Genomic_DNA"/>
</dbReference>
<dbReference type="RefSeq" id="XP_663349.1">
    <property type="nucleotide sequence ID" value="XM_658257.1"/>
</dbReference>
<dbReference type="SMR" id="Q5B136"/>
<dbReference type="FunCoup" id="Q5B136">
    <property type="interactions" value="103"/>
</dbReference>
<dbReference type="STRING" id="227321.Q5B136"/>
<dbReference type="EnsemblFungi" id="CBF81290">
    <property type="protein sequence ID" value="CBF81290"/>
    <property type="gene ID" value="ANIA_05745"/>
</dbReference>
<dbReference type="KEGG" id="ani:ANIA_05745"/>
<dbReference type="VEuPathDB" id="FungiDB:AN5745"/>
<dbReference type="eggNOG" id="KOG4813">
    <property type="taxonomic scope" value="Eukaryota"/>
</dbReference>
<dbReference type="HOGENOM" id="CLU_087988_0_0_1"/>
<dbReference type="InParanoid" id="Q5B136"/>
<dbReference type="OMA" id="KPHYALW"/>
<dbReference type="OrthoDB" id="20381at2759"/>
<dbReference type="Proteomes" id="UP000000560">
    <property type="component" value="Chromosome V"/>
</dbReference>
<dbReference type="GO" id="GO:0016282">
    <property type="term" value="C:eukaryotic 43S preinitiation complex"/>
    <property type="evidence" value="ECO:0007669"/>
    <property type="project" value="UniProtKB-UniRule"/>
</dbReference>
<dbReference type="GO" id="GO:0033290">
    <property type="term" value="C:eukaryotic 48S preinitiation complex"/>
    <property type="evidence" value="ECO:0007669"/>
    <property type="project" value="UniProtKB-UniRule"/>
</dbReference>
<dbReference type="GO" id="GO:0005852">
    <property type="term" value="C:eukaryotic translation initiation factor 3 complex"/>
    <property type="evidence" value="ECO:0000318"/>
    <property type="project" value="GO_Central"/>
</dbReference>
<dbReference type="GO" id="GO:0003743">
    <property type="term" value="F:translation initiation factor activity"/>
    <property type="evidence" value="ECO:0007669"/>
    <property type="project" value="UniProtKB-UniRule"/>
</dbReference>
<dbReference type="GO" id="GO:0001732">
    <property type="term" value="P:formation of cytoplasmic translation initiation complex"/>
    <property type="evidence" value="ECO:0007669"/>
    <property type="project" value="UniProtKB-UniRule"/>
</dbReference>
<dbReference type="FunFam" id="1.10.246.60:FF:000003">
    <property type="entry name" value="Eukaryotic translation initiation factor 3 subunit J"/>
    <property type="match status" value="1"/>
</dbReference>
<dbReference type="Gene3D" id="1.10.246.60">
    <property type="entry name" value="Eukaryotic translation initiation factor 3 like domains"/>
    <property type="match status" value="1"/>
</dbReference>
<dbReference type="HAMAP" id="MF_03009">
    <property type="entry name" value="eIF3j"/>
    <property type="match status" value="1"/>
</dbReference>
<dbReference type="InterPro" id="IPR023194">
    <property type="entry name" value="eIF3-like_dom_sf"/>
</dbReference>
<dbReference type="InterPro" id="IPR013906">
    <property type="entry name" value="eIF3j"/>
</dbReference>
<dbReference type="PANTHER" id="PTHR21681">
    <property type="entry name" value="EUKARYOTIC TRANSLATION INITIATION FACTOR 3 SUBUNIT J"/>
    <property type="match status" value="1"/>
</dbReference>
<dbReference type="PANTHER" id="PTHR21681:SF0">
    <property type="entry name" value="EUKARYOTIC TRANSLATION INITIATION FACTOR 3 SUBUNIT J"/>
    <property type="match status" value="1"/>
</dbReference>
<dbReference type="Pfam" id="PF08597">
    <property type="entry name" value="eIF3_subunit"/>
    <property type="match status" value="1"/>
</dbReference>
<gene>
    <name type="primary">hcr1</name>
    <name type="ORF">AN5745</name>
</gene>
<accession>Q5B136</accession>
<accession>C8VFJ5</accession>
<comment type="function">
    <text evidence="1">Component of the eukaryotic translation initiation factor 3 (eIF-3) complex, which is involved in protein synthesis of a specialized repertoire of mRNAs and, together with other initiation factors, stimulates binding of mRNA and methionyl-tRNAi to the 40S ribosome. The eIF-3 complex specifically targets and initiates translation of a subset of mRNAs involved in cell proliferation.</text>
</comment>
<comment type="subunit">
    <text evidence="1">Component of the eukaryotic translation initiation factor 3 (eIF-3) complex.</text>
</comment>
<comment type="subcellular location">
    <subcellularLocation>
        <location evidence="1">Cytoplasm</location>
    </subcellularLocation>
</comment>
<comment type="similarity">
    <text evidence="1">Belongs to the eIF-3 subunit J family.</text>
</comment>
<comment type="sequence caution" evidence="3">
    <conflict type="erroneous gene model prediction">
        <sequence resource="EMBL-CDS" id="EAA62838"/>
    </conflict>
</comment>
<reference key="1">
    <citation type="journal article" date="2005" name="Nature">
        <title>Sequencing of Aspergillus nidulans and comparative analysis with A. fumigatus and A. oryzae.</title>
        <authorList>
            <person name="Galagan J.E."/>
            <person name="Calvo S.E."/>
            <person name="Cuomo C."/>
            <person name="Ma L.-J."/>
            <person name="Wortman J.R."/>
            <person name="Batzoglou S."/>
            <person name="Lee S.-I."/>
            <person name="Bastuerkmen M."/>
            <person name="Spevak C.C."/>
            <person name="Clutterbuck J."/>
            <person name="Kapitonov V."/>
            <person name="Jurka J."/>
            <person name="Scazzocchio C."/>
            <person name="Farman M.L."/>
            <person name="Butler J."/>
            <person name="Purcell S."/>
            <person name="Harris S."/>
            <person name="Braus G.H."/>
            <person name="Draht O."/>
            <person name="Busch S."/>
            <person name="D'Enfert C."/>
            <person name="Bouchier C."/>
            <person name="Goldman G.H."/>
            <person name="Bell-Pedersen D."/>
            <person name="Griffiths-Jones S."/>
            <person name="Doonan J.H."/>
            <person name="Yu J."/>
            <person name="Vienken K."/>
            <person name="Pain A."/>
            <person name="Freitag M."/>
            <person name="Selker E.U."/>
            <person name="Archer D.B."/>
            <person name="Penalva M.A."/>
            <person name="Oakley B.R."/>
            <person name="Momany M."/>
            <person name="Tanaka T."/>
            <person name="Kumagai T."/>
            <person name="Asai K."/>
            <person name="Machida M."/>
            <person name="Nierman W.C."/>
            <person name="Denning D.W."/>
            <person name="Caddick M.X."/>
            <person name="Hynes M."/>
            <person name="Paoletti M."/>
            <person name="Fischer R."/>
            <person name="Miller B.L."/>
            <person name="Dyer P.S."/>
            <person name="Sachs M.S."/>
            <person name="Osmani S.A."/>
            <person name="Birren B.W."/>
        </authorList>
    </citation>
    <scope>NUCLEOTIDE SEQUENCE [LARGE SCALE GENOMIC DNA]</scope>
    <source>
        <strain>FGSC A4 / ATCC 38163 / CBS 112.46 / NRRL 194 / M139</strain>
    </source>
</reference>
<reference key="2">
    <citation type="journal article" date="2009" name="Fungal Genet. Biol.">
        <title>The 2008 update of the Aspergillus nidulans genome annotation: a community effort.</title>
        <authorList>
            <person name="Wortman J.R."/>
            <person name="Gilsenan J.M."/>
            <person name="Joardar V."/>
            <person name="Deegan J."/>
            <person name="Clutterbuck J."/>
            <person name="Andersen M.R."/>
            <person name="Archer D."/>
            <person name="Bencina M."/>
            <person name="Braus G."/>
            <person name="Coutinho P."/>
            <person name="von Dohren H."/>
            <person name="Doonan J."/>
            <person name="Driessen A.J."/>
            <person name="Durek P."/>
            <person name="Espeso E."/>
            <person name="Fekete E."/>
            <person name="Flipphi M."/>
            <person name="Estrada C.G."/>
            <person name="Geysens S."/>
            <person name="Goldman G."/>
            <person name="de Groot P.W."/>
            <person name="Hansen K."/>
            <person name="Harris S.D."/>
            <person name="Heinekamp T."/>
            <person name="Helmstaedt K."/>
            <person name="Henrissat B."/>
            <person name="Hofmann G."/>
            <person name="Homan T."/>
            <person name="Horio T."/>
            <person name="Horiuchi H."/>
            <person name="James S."/>
            <person name="Jones M."/>
            <person name="Karaffa L."/>
            <person name="Karanyi Z."/>
            <person name="Kato M."/>
            <person name="Keller N."/>
            <person name="Kelly D.E."/>
            <person name="Kiel J.A."/>
            <person name="Kim J.M."/>
            <person name="van der Klei I.J."/>
            <person name="Klis F.M."/>
            <person name="Kovalchuk A."/>
            <person name="Krasevec N."/>
            <person name="Kubicek C.P."/>
            <person name="Liu B."/>
            <person name="Maccabe A."/>
            <person name="Meyer V."/>
            <person name="Mirabito P."/>
            <person name="Miskei M."/>
            <person name="Mos M."/>
            <person name="Mullins J."/>
            <person name="Nelson D.R."/>
            <person name="Nielsen J."/>
            <person name="Oakley B.R."/>
            <person name="Osmani S.A."/>
            <person name="Pakula T."/>
            <person name="Paszewski A."/>
            <person name="Paulsen I."/>
            <person name="Pilsyk S."/>
            <person name="Pocsi I."/>
            <person name="Punt P.J."/>
            <person name="Ram A.F."/>
            <person name="Ren Q."/>
            <person name="Robellet X."/>
            <person name="Robson G."/>
            <person name="Seiboth B."/>
            <person name="van Solingen P."/>
            <person name="Specht T."/>
            <person name="Sun J."/>
            <person name="Taheri-Talesh N."/>
            <person name="Takeshita N."/>
            <person name="Ussery D."/>
            <person name="vanKuyk P.A."/>
            <person name="Visser H."/>
            <person name="van de Vondervoort P.J."/>
            <person name="de Vries R.P."/>
            <person name="Walton J."/>
            <person name="Xiang X."/>
            <person name="Xiong Y."/>
            <person name="Zeng A.P."/>
            <person name="Brandt B.W."/>
            <person name="Cornell M.J."/>
            <person name="van den Hondel C.A."/>
            <person name="Visser J."/>
            <person name="Oliver S.G."/>
            <person name="Turner G."/>
        </authorList>
    </citation>
    <scope>GENOME REANNOTATION</scope>
    <source>
        <strain>FGSC A4 / ATCC 38163 / CBS 112.46 / NRRL 194 / M139</strain>
    </source>
</reference>
<proteinExistence type="inferred from homology"/>
<feature type="chain" id="PRO_0000365154" description="Eukaryotic translation initiation factor 3 subunit J">
    <location>
        <begin position="1"/>
        <end position="265"/>
    </location>
</feature>
<feature type="region of interest" description="Disordered" evidence="2">
    <location>
        <begin position="1"/>
        <end position="113"/>
    </location>
</feature>
<feature type="region of interest" description="Disordered" evidence="2">
    <location>
        <begin position="215"/>
        <end position="237"/>
    </location>
</feature>
<feature type="coiled-coil region" evidence="1">
    <location>
        <begin position="43"/>
        <end position="95"/>
    </location>
</feature>
<feature type="compositionally biased region" description="Acidic residues" evidence="2">
    <location>
        <begin position="27"/>
        <end position="45"/>
    </location>
</feature>
<feature type="compositionally biased region" description="Basic and acidic residues" evidence="2">
    <location>
        <begin position="46"/>
        <end position="62"/>
    </location>
</feature>
<feature type="compositionally biased region" description="Acidic residues" evidence="2">
    <location>
        <begin position="86"/>
        <end position="97"/>
    </location>
</feature>
<feature type="compositionally biased region" description="Basic and acidic residues" evidence="2">
    <location>
        <begin position="98"/>
        <end position="113"/>
    </location>
</feature>
<feature type="compositionally biased region" description="Basic and acidic residues" evidence="2">
    <location>
        <begin position="217"/>
        <end position="229"/>
    </location>
</feature>
<protein>
    <recommendedName>
        <fullName evidence="1">Eukaryotic translation initiation factor 3 subunit J</fullName>
        <shortName evidence="1">eIF3j</shortName>
    </recommendedName>
    <alternativeName>
        <fullName>Eukaryotic translation initiation factor 3 30 kDa subunit</fullName>
        <shortName>eIF-3 30 kDa</shortName>
    </alternativeName>
</protein>
<evidence type="ECO:0000255" key="1">
    <source>
        <dbReference type="HAMAP-Rule" id="MF_03009"/>
    </source>
</evidence>
<evidence type="ECO:0000256" key="2">
    <source>
        <dbReference type="SAM" id="MobiDB-lite"/>
    </source>
</evidence>
<evidence type="ECO:0000305" key="3"/>